<name>DRS4_AGAAN</name>
<sequence length="72" mass="7996">MAFLKKSLFLVLFLGMVSLSICEEEKREEENEQEDDEQSEEKRGMFTNMLKGIGKLAGQAALGAVKTLAGEQ</sequence>
<evidence type="ECO:0000250" key="1"/>
<evidence type="ECO:0000255" key="2"/>
<evidence type="ECO:0000256" key="3">
    <source>
        <dbReference type="SAM" id="MobiDB-lite"/>
    </source>
</evidence>
<evidence type="ECO:0000303" key="4">
    <source>
    </source>
</evidence>
<evidence type="ECO:0000303" key="5">
    <source>
    </source>
</evidence>
<evidence type="ECO:0000305" key="6"/>
<evidence type="ECO:0000305" key="7">
    <source>
    </source>
</evidence>
<comment type="function">
    <text evidence="1">Possesses a potent antimicrobial activity against Gram-positive and Gram-negative bacteria. Probably acts by disturbing membrane functions with its amphipathic structure (By similarity).</text>
</comment>
<comment type="subcellular location">
    <subcellularLocation>
        <location evidence="7">Secreted</location>
    </subcellularLocation>
</comment>
<comment type="tissue specificity">
    <text evidence="7">Expressed by the skin glands.</text>
</comment>
<comment type="similarity">
    <text evidence="6">Belongs to the frog skin active peptide (FSAP) family. Dermaseptin subfamily.</text>
</comment>
<comment type="online information" name="The antimicrobial peptide database">
    <link uri="https://wangapd3.com/database/query_output.php?ID=0962"/>
</comment>
<organism>
    <name type="scientific">Agalychnis annae</name>
    <name type="common">Blue-sided leaf frog</name>
    <name type="synonym">Phyllomedusa annae</name>
    <dbReference type="NCBI Taxonomy" id="75990"/>
    <lineage>
        <taxon>Eukaryota</taxon>
        <taxon>Metazoa</taxon>
        <taxon>Chordata</taxon>
        <taxon>Craniata</taxon>
        <taxon>Vertebrata</taxon>
        <taxon>Euteleostomi</taxon>
        <taxon>Amphibia</taxon>
        <taxon>Batrachia</taxon>
        <taxon>Anura</taxon>
        <taxon>Neobatrachia</taxon>
        <taxon>Hyloidea</taxon>
        <taxon>Hylidae</taxon>
        <taxon>Phyllomedusinae</taxon>
        <taxon>Agalychnis</taxon>
    </lineage>
</organism>
<dbReference type="EMBL" id="AJ005186">
    <property type="protein sequence ID" value="CAA06423.1"/>
    <property type="molecule type" value="Genomic_DNA"/>
</dbReference>
<dbReference type="GO" id="GO:0005576">
    <property type="term" value="C:extracellular region"/>
    <property type="evidence" value="ECO:0007669"/>
    <property type="project" value="UniProtKB-SubCell"/>
</dbReference>
<dbReference type="GO" id="GO:0042742">
    <property type="term" value="P:defense response to bacterium"/>
    <property type="evidence" value="ECO:0007669"/>
    <property type="project" value="UniProtKB-KW"/>
</dbReference>
<dbReference type="InterPro" id="IPR022731">
    <property type="entry name" value="Dermaseptin_dom"/>
</dbReference>
<dbReference type="InterPro" id="IPR004275">
    <property type="entry name" value="Frog_antimicrobial_propeptide"/>
</dbReference>
<dbReference type="InterPro" id="IPR016322">
    <property type="entry name" value="FSAP"/>
</dbReference>
<dbReference type="Pfam" id="PF12121">
    <property type="entry name" value="DD_K"/>
    <property type="match status" value="1"/>
</dbReference>
<dbReference type="Pfam" id="PF03032">
    <property type="entry name" value="FSAP_sig_propep"/>
    <property type="match status" value="1"/>
</dbReference>
<dbReference type="PIRSF" id="PIRSF001822">
    <property type="entry name" value="Dermaseptin_precursor"/>
    <property type="match status" value="1"/>
</dbReference>
<feature type="signal peptide" evidence="2">
    <location>
        <begin position="1"/>
        <end position="22"/>
    </location>
</feature>
<feature type="propeptide" id="PRO_0000007068" evidence="6">
    <location>
        <begin position="23"/>
        <end position="41"/>
    </location>
</feature>
<feature type="peptide" id="PRO_0000007069" description="Dermaseptin-A4" evidence="7">
    <location>
        <begin position="44"/>
        <end position="69"/>
    </location>
</feature>
<feature type="propeptide" id="PRO_0000007070" evidence="6">
    <location>
        <begin position="71"/>
        <end position="72"/>
    </location>
</feature>
<feature type="region of interest" description="Disordered" evidence="3">
    <location>
        <begin position="24"/>
        <end position="43"/>
    </location>
</feature>
<feature type="compositionally biased region" description="Acidic residues" evidence="3">
    <location>
        <begin position="30"/>
        <end position="39"/>
    </location>
</feature>
<feature type="modified residue" description="Alanine amide" evidence="7">
    <location>
        <position position="69"/>
    </location>
</feature>
<keyword id="KW-0027">Amidation</keyword>
<keyword id="KW-0878">Amphibian defense peptide</keyword>
<keyword id="KW-0044">Antibiotic</keyword>
<keyword id="KW-0929">Antimicrobial</keyword>
<keyword id="KW-0165">Cleavage on pair of basic residues</keyword>
<keyword id="KW-0964">Secreted</keyword>
<keyword id="KW-0732">Signal</keyword>
<proteinExistence type="evidence at protein level"/>
<reference key="1">
    <citation type="journal article" date="1998" name="Biochim. Biophys. Acta">
        <title>Cloning of cDNAs encoding new peptides of the dermaseptin-family.</title>
        <authorList>
            <person name="Wechselberger C."/>
        </authorList>
    </citation>
    <scope>NUCLEOTIDE SEQUENCE [GENOMIC DNA]</scope>
    <scope>AMIDATION AT ALA-69</scope>
    <source>
        <tissue>Skin</tissue>
    </source>
</reference>
<reference key="2">
    <citation type="journal article" date="2008" name="Peptides">
        <title>A consistent nomenclature of antimicrobial peptides isolated from frogs of the subfamily Phyllomedusinae.</title>
        <authorList>
            <person name="Amiche M."/>
            <person name="Ladram A."/>
            <person name="Nicolas P."/>
        </authorList>
    </citation>
    <scope>NOMENCLATURE</scope>
</reference>
<accession>O93224</accession>
<protein>
    <recommendedName>
        <fullName evidence="4">Dermaseptin-A4</fullName>
        <shortName evidence="4">DRS-A4</shortName>
    </recommendedName>
    <alternativeName>
        <fullName evidence="5">Dermaseptin AA-3-3</fullName>
    </alternativeName>
</protein>